<evidence type="ECO:0000255" key="1">
    <source>
        <dbReference type="HAMAP-Rule" id="MF_01345"/>
    </source>
</evidence>
<evidence type="ECO:0000305" key="2"/>
<protein>
    <recommendedName>
        <fullName evidence="1">Small ribosomal subunit protein uS17</fullName>
    </recommendedName>
    <alternativeName>
        <fullName evidence="2">30S ribosomal protein S17</fullName>
    </alternativeName>
</protein>
<dbReference type="EMBL" id="CP000563">
    <property type="protein sequence ID" value="ABN63626.1"/>
    <property type="molecule type" value="Genomic_DNA"/>
</dbReference>
<dbReference type="RefSeq" id="WP_006083591.1">
    <property type="nucleotide sequence ID" value="NC_009052.1"/>
</dbReference>
<dbReference type="SMR" id="A3DA63"/>
<dbReference type="STRING" id="325240.Sbal_4161"/>
<dbReference type="GeneID" id="67441769"/>
<dbReference type="KEGG" id="sbl:Sbal_4161"/>
<dbReference type="HOGENOM" id="CLU_073626_1_1_6"/>
<dbReference type="OrthoDB" id="9811714at2"/>
<dbReference type="Proteomes" id="UP000001557">
    <property type="component" value="Chromosome"/>
</dbReference>
<dbReference type="GO" id="GO:0022627">
    <property type="term" value="C:cytosolic small ribosomal subunit"/>
    <property type="evidence" value="ECO:0007669"/>
    <property type="project" value="TreeGrafter"/>
</dbReference>
<dbReference type="GO" id="GO:0019843">
    <property type="term" value="F:rRNA binding"/>
    <property type="evidence" value="ECO:0007669"/>
    <property type="project" value="UniProtKB-UniRule"/>
</dbReference>
<dbReference type="GO" id="GO:0003735">
    <property type="term" value="F:structural constituent of ribosome"/>
    <property type="evidence" value="ECO:0007669"/>
    <property type="project" value="InterPro"/>
</dbReference>
<dbReference type="GO" id="GO:0006412">
    <property type="term" value="P:translation"/>
    <property type="evidence" value="ECO:0007669"/>
    <property type="project" value="UniProtKB-UniRule"/>
</dbReference>
<dbReference type="CDD" id="cd00364">
    <property type="entry name" value="Ribosomal_uS17"/>
    <property type="match status" value="1"/>
</dbReference>
<dbReference type="FunFam" id="2.40.50.140:FF:000014">
    <property type="entry name" value="30S ribosomal protein S17"/>
    <property type="match status" value="1"/>
</dbReference>
<dbReference type="Gene3D" id="2.40.50.140">
    <property type="entry name" value="Nucleic acid-binding proteins"/>
    <property type="match status" value="1"/>
</dbReference>
<dbReference type="HAMAP" id="MF_01345_B">
    <property type="entry name" value="Ribosomal_uS17_B"/>
    <property type="match status" value="1"/>
</dbReference>
<dbReference type="InterPro" id="IPR012340">
    <property type="entry name" value="NA-bd_OB-fold"/>
</dbReference>
<dbReference type="InterPro" id="IPR000266">
    <property type="entry name" value="Ribosomal_uS17"/>
</dbReference>
<dbReference type="InterPro" id="IPR019984">
    <property type="entry name" value="Ribosomal_uS17_bact/chlr"/>
</dbReference>
<dbReference type="InterPro" id="IPR019979">
    <property type="entry name" value="Ribosomal_uS17_CS"/>
</dbReference>
<dbReference type="NCBIfam" id="NF004123">
    <property type="entry name" value="PRK05610.1"/>
    <property type="match status" value="1"/>
</dbReference>
<dbReference type="NCBIfam" id="TIGR03635">
    <property type="entry name" value="uS17_bact"/>
    <property type="match status" value="1"/>
</dbReference>
<dbReference type="PANTHER" id="PTHR10744">
    <property type="entry name" value="40S RIBOSOMAL PROTEIN S11 FAMILY MEMBER"/>
    <property type="match status" value="1"/>
</dbReference>
<dbReference type="PANTHER" id="PTHR10744:SF1">
    <property type="entry name" value="SMALL RIBOSOMAL SUBUNIT PROTEIN US17M"/>
    <property type="match status" value="1"/>
</dbReference>
<dbReference type="Pfam" id="PF00366">
    <property type="entry name" value="Ribosomal_S17"/>
    <property type="match status" value="1"/>
</dbReference>
<dbReference type="PRINTS" id="PR00973">
    <property type="entry name" value="RIBOSOMALS17"/>
</dbReference>
<dbReference type="SUPFAM" id="SSF50249">
    <property type="entry name" value="Nucleic acid-binding proteins"/>
    <property type="match status" value="1"/>
</dbReference>
<dbReference type="PROSITE" id="PS00056">
    <property type="entry name" value="RIBOSOMAL_S17"/>
    <property type="match status" value="1"/>
</dbReference>
<reference key="1">
    <citation type="submission" date="2007-02" db="EMBL/GenBank/DDBJ databases">
        <title>Complete sequence of chromosome of Shewanella baltica OS155.</title>
        <authorList>
            <consortium name="US DOE Joint Genome Institute"/>
            <person name="Copeland A."/>
            <person name="Lucas S."/>
            <person name="Lapidus A."/>
            <person name="Barry K."/>
            <person name="Detter J.C."/>
            <person name="Glavina del Rio T."/>
            <person name="Hammon N."/>
            <person name="Israni S."/>
            <person name="Dalin E."/>
            <person name="Tice H."/>
            <person name="Pitluck S."/>
            <person name="Sims D.R."/>
            <person name="Brettin T."/>
            <person name="Bruce D."/>
            <person name="Han C."/>
            <person name="Tapia R."/>
            <person name="Brainard J."/>
            <person name="Schmutz J."/>
            <person name="Larimer F."/>
            <person name="Land M."/>
            <person name="Hauser L."/>
            <person name="Kyrpides N."/>
            <person name="Mikhailova N."/>
            <person name="Brettar I."/>
            <person name="Klappenbach J."/>
            <person name="Konstantinidis K."/>
            <person name="Rodrigues J."/>
            <person name="Tiedje J."/>
            <person name="Richardson P."/>
        </authorList>
    </citation>
    <scope>NUCLEOTIDE SEQUENCE [LARGE SCALE GENOMIC DNA]</scope>
    <source>
        <strain>OS155 / ATCC BAA-1091</strain>
    </source>
</reference>
<name>RS17_SHEB5</name>
<feature type="chain" id="PRO_1000055016" description="Small ribosomal subunit protein uS17">
    <location>
        <begin position="1"/>
        <end position="82"/>
    </location>
</feature>
<organism>
    <name type="scientific">Shewanella baltica (strain OS155 / ATCC BAA-1091)</name>
    <dbReference type="NCBI Taxonomy" id="325240"/>
    <lineage>
        <taxon>Bacteria</taxon>
        <taxon>Pseudomonadati</taxon>
        <taxon>Pseudomonadota</taxon>
        <taxon>Gammaproteobacteria</taxon>
        <taxon>Alteromonadales</taxon>
        <taxon>Shewanellaceae</taxon>
        <taxon>Shewanella</taxon>
    </lineage>
</organism>
<keyword id="KW-1185">Reference proteome</keyword>
<keyword id="KW-0687">Ribonucleoprotein</keyword>
<keyword id="KW-0689">Ribosomal protein</keyword>
<keyword id="KW-0694">RNA-binding</keyword>
<keyword id="KW-0699">rRNA-binding</keyword>
<proteinExistence type="inferred from homology"/>
<sequence length="82" mass="9382">MSDKIRTLQGRVTSNKMDKSITVAIERQVKHPIYGKYIKRTTKIHAHDETNQCNEGDLVAIRECRPLSKTKSWTLVEVVSKA</sequence>
<accession>A3DA63</accession>
<comment type="function">
    <text evidence="1">One of the primary rRNA binding proteins, it binds specifically to the 5'-end of 16S ribosomal RNA.</text>
</comment>
<comment type="subunit">
    <text evidence="1">Part of the 30S ribosomal subunit.</text>
</comment>
<comment type="similarity">
    <text evidence="1">Belongs to the universal ribosomal protein uS17 family.</text>
</comment>
<gene>
    <name evidence="1" type="primary">rpsQ</name>
    <name type="ordered locus">Sbal_4161</name>
</gene>